<comment type="function">
    <text evidence="1">Catalyzes the formation of a hydroxyacyl-CoA by addition of water on enoyl-CoA. Also exhibits 3-hydroxyacyl-CoA epimerase and 3-hydroxyacyl-CoA dehydrogenase activities.</text>
</comment>
<comment type="catalytic activity">
    <reaction evidence="1">
        <text>a (3S)-3-hydroxyacyl-CoA = a (2E)-enoyl-CoA + H2O</text>
        <dbReference type="Rhea" id="RHEA:16105"/>
        <dbReference type="ChEBI" id="CHEBI:15377"/>
        <dbReference type="ChEBI" id="CHEBI:57318"/>
        <dbReference type="ChEBI" id="CHEBI:58856"/>
        <dbReference type="EC" id="4.2.1.17"/>
    </reaction>
</comment>
<comment type="catalytic activity">
    <reaction evidence="1">
        <text>a 4-saturated-(3S)-3-hydroxyacyl-CoA = a (3E)-enoyl-CoA + H2O</text>
        <dbReference type="Rhea" id="RHEA:20724"/>
        <dbReference type="ChEBI" id="CHEBI:15377"/>
        <dbReference type="ChEBI" id="CHEBI:58521"/>
        <dbReference type="ChEBI" id="CHEBI:137480"/>
        <dbReference type="EC" id="4.2.1.17"/>
    </reaction>
</comment>
<comment type="catalytic activity">
    <reaction evidence="1">
        <text>a (3S)-3-hydroxyacyl-CoA + NAD(+) = a 3-oxoacyl-CoA + NADH + H(+)</text>
        <dbReference type="Rhea" id="RHEA:22432"/>
        <dbReference type="ChEBI" id="CHEBI:15378"/>
        <dbReference type="ChEBI" id="CHEBI:57318"/>
        <dbReference type="ChEBI" id="CHEBI:57540"/>
        <dbReference type="ChEBI" id="CHEBI:57945"/>
        <dbReference type="ChEBI" id="CHEBI:90726"/>
        <dbReference type="EC" id="1.1.1.35"/>
    </reaction>
</comment>
<comment type="catalytic activity">
    <reaction evidence="1">
        <text>(3S)-3-hydroxybutanoyl-CoA = (3R)-3-hydroxybutanoyl-CoA</text>
        <dbReference type="Rhea" id="RHEA:21760"/>
        <dbReference type="ChEBI" id="CHEBI:57315"/>
        <dbReference type="ChEBI" id="CHEBI:57316"/>
        <dbReference type="EC" id="5.1.2.3"/>
    </reaction>
</comment>
<comment type="pathway">
    <text evidence="1">Lipid metabolism; fatty acid beta-oxidation.</text>
</comment>
<comment type="subunit">
    <text evidence="1">Heterotetramer of two alpha chains (FadJ) and two beta chains (FadI).</text>
</comment>
<comment type="subcellular location">
    <subcellularLocation>
        <location evidence="1">Cytoplasm</location>
    </subcellularLocation>
</comment>
<comment type="similarity">
    <text evidence="1">In the N-terminal section; belongs to the enoyl-CoA hydratase/isomerase family.</text>
</comment>
<comment type="similarity">
    <text evidence="1">In the central section; belongs to the 3-hydroxyacyl-CoA dehydrogenase family.</text>
</comment>
<organism>
    <name type="scientific">Salmonella paratyphi B (strain ATCC BAA-1250 / SPB7)</name>
    <dbReference type="NCBI Taxonomy" id="1016998"/>
    <lineage>
        <taxon>Bacteria</taxon>
        <taxon>Pseudomonadati</taxon>
        <taxon>Pseudomonadota</taxon>
        <taxon>Gammaproteobacteria</taxon>
        <taxon>Enterobacterales</taxon>
        <taxon>Enterobacteriaceae</taxon>
        <taxon>Salmonella</taxon>
    </lineage>
</organism>
<dbReference type="EC" id="4.2.1.17" evidence="1"/>
<dbReference type="EC" id="5.1.2.3" evidence="1"/>
<dbReference type="EC" id="1.1.1.35" evidence="1"/>
<dbReference type="EMBL" id="CP000886">
    <property type="protein sequence ID" value="ABX66005.1"/>
    <property type="molecule type" value="Genomic_DNA"/>
</dbReference>
<dbReference type="RefSeq" id="WP_000214135.1">
    <property type="nucleotide sequence ID" value="NC_010102.1"/>
</dbReference>
<dbReference type="SMR" id="A9N453"/>
<dbReference type="KEGG" id="spq:SPAB_00579"/>
<dbReference type="PATRIC" id="fig|1016998.12.peg.543"/>
<dbReference type="HOGENOM" id="CLU_009834_16_3_6"/>
<dbReference type="BioCyc" id="SENT1016998:SPAB_RS02390-MONOMER"/>
<dbReference type="UniPathway" id="UPA00659"/>
<dbReference type="Proteomes" id="UP000008556">
    <property type="component" value="Chromosome"/>
</dbReference>
<dbReference type="GO" id="GO:0005737">
    <property type="term" value="C:cytoplasm"/>
    <property type="evidence" value="ECO:0007669"/>
    <property type="project" value="UniProtKB-SubCell"/>
</dbReference>
<dbReference type="GO" id="GO:0008692">
    <property type="term" value="F:3-hydroxybutyryl-CoA epimerase activity"/>
    <property type="evidence" value="ECO:0007669"/>
    <property type="project" value="UniProtKB-UniRule"/>
</dbReference>
<dbReference type="GO" id="GO:0004300">
    <property type="term" value="F:enoyl-CoA hydratase activity"/>
    <property type="evidence" value="ECO:0007669"/>
    <property type="project" value="UniProtKB-UniRule"/>
</dbReference>
<dbReference type="GO" id="GO:0016509">
    <property type="term" value="F:long-chain-3-hydroxyacyl-CoA dehydrogenase activity"/>
    <property type="evidence" value="ECO:0007669"/>
    <property type="project" value="TreeGrafter"/>
</dbReference>
<dbReference type="GO" id="GO:0070403">
    <property type="term" value="F:NAD+ binding"/>
    <property type="evidence" value="ECO:0007669"/>
    <property type="project" value="InterPro"/>
</dbReference>
<dbReference type="GO" id="GO:0006635">
    <property type="term" value="P:fatty acid beta-oxidation"/>
    <property type="evidence" value="ECO:0007669"/>
    <property type="project" value="UniProtKB-UniRule"/>
</dbReference>
<dbReference type="CDD" id="cd06558">
    <property type="entry name" value="crotonase-like"/>
    <property type="match status" value="1"/>
</dbReference>
<dbReference type="FunFam" id="1.10.1040.50:FF:000003">
    <property type="entry name" value="Fatty acid oxidation complex subunit alpha"/>
    <property type="match status" value="1"/>
</dbReference>
<dbReference type="FunFam" id="3.90.226.10:FF:000011">
    <property type="entry name" value="Fatty acid oxidation complex subunit alpha"/>
    <property type="match status" value="1"/>
</dbReference>
<dbReference type="FunFam" id="3.40.50.720:FF:000009">
    <property type="entry name" value="Fatty oxidation complex, alpha subunit"/>
    <property type="match status" value="1"/>
</dbReference>
<dbReference type="Gene3D" id="1.10.1040.50">
    <property type="match status" value="1"/>
</dbReference>
<dbReference type="Gene3D" id="3.90.226.10">
    <property type="entry name" value="2-enoyl-CoA Hydratase, Chain A, domain 1"/>
    <property type="match status" value="1"/>
</dbReference>
<dbReference type="Gene3D" id="3.40.50.720">
    <property type="entry name" value="NAD(P)-binding Rossmann-like Domain"/>
    <property type="match status" value="1"/>
</dbReference>
<dbReference type="HAMAP" id="MF_01617">
    <property type="entry name" value="FadJ"/>
    <property type="match status" value="1"/>
</dbReference>
<dbReference type="InterPro" id="IPR006180">
    <property type="entry name" value="3-OHacyl-CoA_DH_CS"/>
</dbReference>
<dbReference type="InterPro" id="IPR006176">
    <property type="entry name" value="3-OHacyl-CoA_DH_NAD-bd"/>
</dbReference>
<dbReference type="InterPro" id="IPR006108">
    <property type="entry name" value="3HC_DH_C"/>
</dbReference>
<dbReference type="InterPro" id="IPR008927">
    <property type="entry name" value="6-PGluconate_DH-like_C_sf"/>
</dbReference>
<dbReference type="InterPro" id="IPR029045">
    <property type="entry name" value="ClpP/crotonase-like_dom_sf"/>
</dbReference>
<dbReference type="InterPro" id="IPR001753">
    <property type="entry name" value="Enoyl-CoA_hydra/iso"/>
</dbReference>
<dbReference type="InterPro" id="IPR050136">
    <property type="entry name" value="FA_oxidation_alpha_subunit"/>
</dbReference>
<dbReference type="InterPro" id="IPR012802">
    <property type="entry name" value="FadJ"/>
</dbReference>
<dbReference type="InterPro" id="IPR036291">
    <property type="entry name" value="NAD(P)-bd_dom_sf"/>
</dbReference>
<dbReference type="NCBIfam" id="TIGR02440">
    <property type="entry name" value="FadJ"/>
    <property type="match status" value="1"/>
</dbReference>
<dbReference type="NCBIfam" id="NF008363">
    <property type="entry name" value="PRK11154.1"/>
    <property type="match status" value="1"/>
</dbReference>
<dbReference type="PANTHER" id="PTHR43612">
    <property type="entry name" value="TRIFUNCTIONAL ENZYME SUBUNIT ALPHA"/>
    <property type="match status" value="1"/>
</dbReference>
<dbReference type="PANTHER" id="PTHR43612:SF3">
    <property type="entry name" value="TRIFUNCTIONAL ENZYME SUBUNIT ALPHA, MITOCHONDRIAL"/>
    <property type="match status" value="1"/>
</dbReference>
<dbReference type="Pfam" id="PF00725">
    <property type="entry name" value="3HCDH"/>
    <property type="match status" value="1"/>
</dbReference>
<dbReference type="Pfam" id="PF02737">
    <property type="entry name" value="3HCDH_N"/>
    <property type="match status" value="1"/>
</dbReference>
<dbReference type="Pfam" id="PF00378">
    <property type="entry name" value="ECH_1"/>
    <property type="match status" value="1"/>
</dbReference>
<dbReference type="SUPFAM" id="SSF48179">
    <property type="entry name" value="6-phosphogluconate dehydrogenase C-terminal domain-like"/>
    <property type="match status" value="2"/>
</dbReference>
<dbReference type="SUPFAM" id="SSF52096">
    <property type="entry name" value="ClpP/crotonase"/>
    <property type="match status" value="1"/>
</dbReference>
<dbReference type="SUPFAM" id="SSF51735">
    <property type="entry name" value="NAD(P)-binding Rossmann-fold domains"/>
    <property type="match status" value="1"/>
</dbReference>
<dbReference type="PROSITE" id="PS00067">
    <property type="entry name" value="3HCDH"/>
    <property type="match status" value="1"/>
</dbReference>
<sequence length="715" mass="77225">MTTTSAFMLNVRLDNVAVVAIDVPGEKVNTLKAEFAAQVRAILKQIRENKALQGVVFISAKADNFIAGADINMIGHCQNAQEAETLARQGQQLMAEIQALPVPVIAAIHGACLGGGLEMALACHRRICTDDVKTVLGLPEVQLGLLPGSGGTQRLPRLVGVSTALDMILTGKQLRARQALKAGLVDDVVPQTILLEAAVELAKKERLAQRTLPVRERILAGPLGRALLFRLVRKKTAQKTQGNYPATERIIDVIETGLAQGSSSGYDAEARAFGELAMTPQSQALRAIFFASTEVKKDPGSDAPPGPLNSVGILGGGLMGGGIAWVTACKGGLPVRIKDINTQGINHALKYSWDLLETKVRRRHIKASERDKQLALISGSTDYRGFSHRDLVIEAVFEDLPLKQQMVAEVEQNCAAHTIFASNTSSLPIGDIAANAARPEQVIGLHFFSPVEKMPLVEVIPHASTSAQTIATTVKLAKKQGKTPIVVSDKAGFYVNRILAPYINEAIRMLTEGERVEHIDAALVKFGFPVGPIQLLDEVGIDTGTKIIPVLEAAYGERFSAPANVVASILNDDRKGRKNGRGFYLYGEKGRKSKKQVDPAIYKLIGVQGQSRLSAQQVAERCVMLMLNEAARCFDEKVIRSARDGDIGAVFGIGFPPFLGGPFRYMDALGPGEMVATLQRLAALYGPRYAPCEQLVRMAERREHFWTNGETDQGN</sequence>
<gene>
    <name evidence="1" type="primary">fadJ</name>
    <name type="ordered locus">SPAB_00579</name>
</gene>
<keyword id="KW-0963">Cytoplasm</keyword>
<keyword id="KW-0276">Fatty acid metabolism</keyword>
<keyword id="KW-0413">Isomerase</keyword>
<keyword id="KW-0442">Lipid degradation</keyword>
<keyword id="KW-0443">Lipid metabolism</keyword>
<keyword id="KW-0456">Lyase</keyword>
<keyword id="KW-0511">Multifunctional enzyme</keyword>
<keyword id="KW-0520">NAD</keyword>
<keyword id="KW-0560">Oxidoreductase</keyword>
<proteinExistence type="inferred from homology"/>
<name>FADJ_SALPB</name>
<protein>
    <recommendedName>
        <fullName evidence="1">Fatty acid oxidation complex subunit alpha</fullName>
    </recommendedName>
    <domain>
        <recommendedName>
            <fullName evidence="1">Enoyl-CoA hydratase/3-hydroxybutyryl-CoA epimerase</fullName>
            <ecNumber evidence="1">4.2.1.17</ecNumber>
            <ecNumber evidence="1">5.1.2.3</ecNumber>
        </recommendedName>
    </domain>
    <domain>
        <recommendedName>
            <fullName evidence="1">3-hydroxyacyl-CoA dehydrogenase</fullName>
            <ecNumber evidence="1">1.1.1.35</ecNumber>
        </recommendedName>
    </domain>
</protein>
<evidence type="ECO:0000255" key="1">
    <source>
        <dbReference type="HAMAP-Rule" id="MF_01617"/>
    </source>
</evidence>
<reference key="1">
    <citation type="submission" date="2007-11" db="EMBL/GenBank/DDBJ databases">
        <authorList>
            <consortium name="The Salmonella enterica serovar Paratyphi B Genome Sequencing Project"/>
            <person name="McClelland M."/>
            <person name="Sanderson E.K."/>
            <person name="Porwollik S."/>
            <person name="Spieth J."/>
            <person name="Clifton W.S."/>
            <person name="Fulton R."/>
            <person name="Cordes M."/>
            <person name="Wollam A."/>
            <person name="Shah N."/>
            <person name="Pepin K."/>
            <person name="Bhonagiri V."/>
            <person name="Nash W."/>
            <person name="Johnson M."/>
            <person name="Thiruvilangam P."/>
            <person name="Wilson R."/>
        </authorList>
    </citation>
    <scope>NUCLEOTIDE SEQUENCE [LARGE SCALE GENOMIC DNA]</scope>
    <source>
        <strain>ATCC BAA-1250 / SPB7</strain>
    </source>
</reference>
<feature type="chain" id="PRO_1000088062" description="Fatty acid oxidation complex subunit alpha">
    <location>
        <begin position="1"/>
        <end position="715"/>
    </location>
</feature>
<feature type="region of interest" description="Enoyl-CoA hydratase" evidence="1">
    <location>
        <begin position="1"/>
        <end position="190"/>
    </location>
</feature>
<feature type="region of interest" description="3-hydroxyacyl-CoA dehydrogenase" evidence="1">
    <location>
        <begin position="306"/>
        <end position="715"/>
    </location>
</feature>
<feature type="site" description="Important for catalytic activity" evidence="1">
    <location>
        <position position="118"/>
    </location>
</feature>
<feature type="site" description="Important for catalytic activity" evidence="1">
    <location>
        <position position="140"/>
    </location>
</feature>
<accession>A9N453</accession>